<organism>
    <name type="scientific">Exiguobacterium sibiricum (strain DSM 17290 / CCUG 55495 / CIP 109462 / JCM 13490 / 255-15)</name>
    <dbReference type="NCBI Taxonomy" id="262543"/>
    <lineage>
        <taxon>Bacteria</taxon>
        <taxon>Bacillati</taxon>
        <taxon>Bacillota</taxon>
        <taxon>Bacilli</taxon>
        <taxon>Bacillales</taxon>
        <taxon>Bacillales Family XII. Incertae Sedis</taxon>
        <taxon>Exiguobacterium</taxon>
    </lineage>
</organism>
<comment type="function">
    <text evidence="1">Required for maturation of 30S ribosomal subunits.</text>
</comment>
<comment type="subcellular location">
    <subcellularLocation>
        <location evidence="1">Cytoplasm</location>
    </subcellularLocation>
</comment>
<comment type="similarity">
    <text evidence="1">Belongs to the RimP family.</text>
</comment>
<dbReference type="EMBL" id="CP001022">
    <property type="protein sequence ID" value="ACB61293.1"/>
    <property type="molecule type" value="Genomic_DNA"/>
</dbReference>
<dbReference type="RefSeq" id="WP_012370711.1">
    <property type="nucleotide sequence ID" value="NC_010556.1"/>
</dbReference>
<dbReference type="SMR" id="B1YI66"/>
<dbReference type="STRING" id="262543.Exig_1841"/>
<dbReference type="KEGG" id="esi:Exig_1841"/>
<dbReference type="eggNOG" id="COG0779">
    <property type="taxonomic scope" value="Bacteria"/>
</dbReference>
<dbReference type="HOGENOM" id="CLU_070525_2_0_9"/>
<dbReference type="OrthoDB" id="9805006at2"/>
<dbReference type="Proteomes" id="UP000001681">
    <property type="component" value="Chromosome"/>
</dbReference>
<dbReference type="GO" id="GO:0005829">
    <property type="term" value="C:cytosol"/>
    <property type="evidence" value="ECO:0007669"/>
    <property type="project" value="TreeGrafter"/>
</dbReference>
<dbReference type="GO" id="GO:0000028">
    <property type="term" value="P:ribosomal small subunit assembly"/>
    <property type="evidence" value="ECO:0007669"/>
    <property type="project" value="TreeGrafter"/>
</dbReference>
<dbReference type="GO" id="GO:0006412">
    <property type="term" value="P:translation"/>
    <property type="evidence" value="ECO:0007669"/>
    <property type="project" value="TreeGrafter"/>
</dbReference>
<dbReference type="CDD" id="cd01734">
    <property type="entry name" value="YlxS_C"/>
    <property type="match status" value="1"/>
</dbReference>
<dbReference type="FunFam" id="3.30.300.70:FF:000001">
    <property type="entry name" value="Ribosome maturation factor RimP"/>
    <property type="match status" value="1"/>
</dbReference>
<dbReference type="Gene3D" id="2.30.30.180">
    <property type="entry name" value="Ribosome maturation factor RimP, C-terminal domain"/>
    <property type="match status" value="1"/>
</dbReference>
<dbReference type="Gene3D" id="3.30.300.70">
    <property type="entry name" value="RimP-like superfamily, N-terminal"/>
    <property type="match status" value="1"/>
</dbReference>
<dbReference type="HAMAP" id="MF_01077">
    <property type="entry name" value="RimP"/>
    <property type="match status" value="1"/>
</dbReference>
<dbReference type="InterPro" id="IPR003728">
    <property type="entry name" value="Ribosome_maturation_RimP"/>
</dbReference>
<dbReference type="InterPro" id="IPR028998">
    <property type="entry name" value="RimP_C"/>
</dbReference>
<dbReference type="InterPro" id="IPR036847">
    <property type="entry name" value="RimP_C_sf"/>
</dbReference>
<dbReference type="InterPro" id="IPR028989">
    <property type="entry name" value="RimP_N"/>
</dbReference>
<dbReference type="InterPro" id="IPR035956">
    <property type="entry name" value="RimP_N_sf"/>
</dbReference>
<dbReference type="NCBIfam" id="NF000928">
    <property type="entry name" value="PRK00092.1-2"/>
    <property type="match status" value="1"/>
</dbReference>
<dbReference type="PANTHER" id="PTHR33867">
    <property type="entry name" value="RIBOSOME MATURATION FACTOR RIMP"/>
    <property type="match status" value="1"/>
</dbReference>
<dbReference type="PANTHER" id="PTHR33867:SF1">
    <property type="entry name" value="RIBOSOME MATURATION FACTOR RIMP"/>
    <property type="match status" value="1"/>
</dbReference>
<dbReference type="Pfam" id="PF17384">
    <property type="entry name" value="DUF150_C"/>
    <property type="match status" value="1"/>
</dbReference>
<dbReference type="Pfam" id="PF02576">
    <property type="entry name" value="RimP_N"/>
    <property type="match status" value="1"/>
</dbReference>
<dbReference type="SUPFAM" id="SSF74942">
    <property type="entry name" value="YhbC-like, C-terminal domain"/>
    <property type="match status" value="1"/>
</dbReference>
<dbReference type="SUPFAM" id="SSF75420">
    <property type="entry name" value="YhbC-like, N-terminal domain"/>
    <property type="match status" value="1"/>
</dbReference>
<feature type="chain" id="PRO_1000136760" description="Ribosome maturation factor RimP">
    <location>
        <begin position="1"/>
        <end position="155"/>
    </location>
</feature>
<name>RIMP_EXIS2</name>
<reference key="1">
    <citation type="submission" date="2008-04" db="EMBL/GenBank/DDBJ databases">
        <title>Complete sequence of chromosome of Exiguobacterium sibiricum 255-15.</title>
        <authorList>
            <consortium name="US DOE Joint Genome Institute"/>
            <person name="Copeland A."/>
            <person name="Lucas S."/>
            <person name="Lapidus A."/>
            <person name="Glavina del Rio T."/>
            <person name="Dalin E."/>
            <person name="Tice H."/>
            <person name="Bruce D."/>
            <person name="Goodwin L."/>
            <person name="Pitluck S."/>
            <person name="Kiss H."/>
            <person name="Chertkov O."/>
            <person name="Monk C."/>
            <person name="Brettin T."/>
            <person name="Detter J.C."/>
            <person name="Han C."/>
            <person name="Kuske C.R."/>
            <person name="Schmutz J."/>
            <person name="Larimer F."/>
            <person name="Land M."/>
            <person name="Hauser L."/>
            <person name="Kyrpides N."/>
            <person name="Mikhailova N."/>
            <person name="Vishnivetskaya T."/>
            <person name="Rodrigues D.F."/>
            <person name="Gilichinsky D."/>
            <person name="Tiedje J."/>
            <person name="Richardson P."/>
        </authorList>
    </citation>
    <scope>NUCLEOTIDE SEQUENCE [LARGE SCALE GENOMIC DNA]</scope>
    <source>
        <strain>DSM 17290 / CCUG 55495 / CIP 109462 / JCM 13490 / 255-15</strain>
    </source>
</reference>
<protein>
    <recommendedName>
        <fullName evidence="1">Ribosome maturation factor RimP</fullName>
    </recommendedName>
</protein>
<sequence length="155" mass="17624">MTNVTEKVEQLAKPIVEREGMELVDVEFVKEGADWFLRVSIDKDGGVDLEDCVNINEKLSEALNQDDPIDEPYYLDVASPGAERPLKKTEDFEKAIGKHVYIKTHDPVKDATEFEGTLLTYSEEMLELEVRVKTRKLKIEIPVNKIAMARLAVVF</sequence>
<gene>
    <name evidence="1" type="primary">rimP</name>
    <name type="ordered locus">Exig_1841</name>
</gene>
<accession>B1YI66</accession>
<evidence type="ECO:0000255" key="1">
    <source>
        <dbReference type="HAMAP-Rule" id="MF_01077"/>
    </source>
</evidence>
<proteinExistence type="inferred from homology"/>
<keyword id="KW-0963">Cytoplasm</keyword>
<keyword id="KW-1185">Reference proteome</keyword>
<keyword id="KW-0690">Ribosome biogenesis</keyword>